<sequence>MAQTDDRLPQMHATTILMVRKGGRVVIGGDGQVSLGQTIVKGNARKVRRLAKGAVIGGFAGATADAFTLFERLEAKLEQYPGQLSRACVELTKDWRTDRYLRRLEAMMLVADKEVGLLLSGAGDVLEPETGVMAIGSGGNYALSAARALEDGELDAEAIVRRSMKIAAEICVYTNGNLVIETLDAA</sequence>
<gene>
    <name evidence="1" type="primary">hslV</name>
    <name type="ordered locus">Mchl_0655</name>
</gene>
<evidence type="ECO:0000255" key="1">
    <source>
        <dbReference type="HAMAP-Rule" id="MF_00248"/>
    </source>
</evidence>
<dbReference type="EC" id="3.4.25.2" evidence="1"/>
<dbReference type="EMBL" id="CP001298">
    <property type="protein sequence ID" value="ACK81577.1"/>
    <property type="molecule type" value="Genomic_DNA"/>
</dbReference>
<dbReference type="RefSeq" id="WP_012605711.1">
    <property type="nucleotide sequence ID" value="NC_011757.1"/>
</dbReference>
<dbReference type="SMR" id="B7KZ47"/>
<dbReference type="MEROPS" id="T01.006"/>
<dbReference type="KEGG" id="mch:Mchl_0655"/>
<dbReference type="HOGENOM" id="CLU_093872_1_0_5"/>
<dbReference type="Proteomes" id="UP000002385">
    <property type="component" value="Chromosome"/>
</dbReference>
<dbReference type="GO" id="GO:0009376">
    <property type="term" value="C:HslUV protease complex"/>
    <property type="evidence" value="ECO:0007669"/>
    <property type="project" value="UniProtKB-UniRule"/>
</dbReference>
<dbReference type="GO" id="GO:0005839">
    <property type="term" value="C:proteasome core complex"/>
    <property type="evidence" value="ECO:0007669"/>
    <property type="project" value="InterPro"/>
</dbReference>
<dbReference type="GO" id="GO:0046872">
    <property type="term" value="F:metal ion binding"/>
    <property type="evidence" value="ECO:0007669"/>
    <property type="project" value="UniProtKB-KW"/>
</dbReference>
<dbReference type="GO" id="GO:0004298">
    <property type="term" value="F:threonine-type endopeptidase activity"/>
    <property type="evidence" value="ECO:0007669"/>
    <property type="project" value="UniProtKB-KW"/>
</dbReference>
<dbReference type="GO" id="GO:0051603">
    <property type="term" value="P:proteolysis involved in protein catabolic process"/>
    <property type="evidence" value="ECO:0007669"/>
    <property type="project" value="InterPro"/>
</dbReference>
<dbReference type="CDD" id="cd01913">
    <property type="entry name" value="protease_HslV"/>
    <property type="match status" value="1"/>
</dbReference>
<dbReference type="Gene3D" id="3.60.20.10">
    <property type="entry name" value="Glutamine Phosphoribosylpyrophosphate, subunit 1, domain 1"/>
    <property type="match status" value="1"/>
</dbReference>
<dbReference type="HAMAP" id="MF_00248">
    <property type="entry name" value="HslV"/>
    <property type="match status" value="1"/>
</dbReference>
<dbReference type="InterPro" id="IPR022281">
    <property type="entry name" value="ATP-dep_Prtase_HsIV_su"/>
</dbReference>
<dbReference type="InterPro" id="IPR029055">
    <property type="entry name" value="Ntn_hydrolases_N"/>
</dbReference>
<dbReference type="InterPro" id="IPR001353">
    <property type="entry name" value="Proteasome_sua/b"/>
</dbReference>
<dbReference type="InterPro" id="IPR023333">
    <property type="entry name" value="Proteasome_suB-type"/>
</dbReference>
<dbReference type="NCBIfam" id="TIGR03692">
    <property type="entry name" value="ATP_dep_HslV"/>
    <property type="match status" value="1"/>
</dbReference>
<dbReference type="NCBIfam" id="NF003964">
    <property type="entry name" value="PRK05456.1"/>
    <property type="match status" value="1"/>
</dbReference>
<dbReference type="PANTHER" id="PTHR32194:SF7">
    <property type="entry name" value="ATP-DEPENDENT PROTEASE SUBUNIT HSLV"/>
    <property type="match status" value="1"/>
</dbReference>
<dbReference type="PANTHER" id="PTHR32194">
    <property type="entry name" value="METALLOPROTEASE TLDD"/>
    <property type="match status" value="1"/>
</dbReference>
<dbReference type="Pfam" id="PF00227">
    <property type="entry name" value="Proteasome"/>
    <property type="match status" value="1"/>
</dbReference>
<dbReference type="PIRSF" id="PIRSF039093">
    <property type="entry name" value="HslV"/>
    <property type="match status" value="1"/>
</dbReference>
<dbReference type="SUPFAM" id="SSF56235">
    <property type="entry name" value="N-terminal nucleophile aminohydrolases (Ntn hydrolases)"/>
    <property type="match status" value="1"/>
</dbReference>
<dbReference type="PROSITE" id="PS51476">
    <property type="entry name" value="PROTEASOME_BETA_2"/>
    <property type="match status" value="1"/>
</dbReference>
<comment type="function">
    <text evidence="1">Protease subunit of a proteasome-like degradation complex believed to be a general protein degrading machinery.</text>
</comment>
<comment type="catalytic activity">
    <reaction evidence="1">
        <text>ATP-dependent cleavage of peptide bonds with broad specificity.</text>
        <dbReference type="EC" id="3.4.25.2"/>
    </reaction>
</comment>
<comment type="activity regulation">
    <text evidence="1">Allosterically activated by HslU binding.</text>
</comment>
<comment type="subunit">
    <text evidence="1">A double ring-shaped homohexamer of HslV is capped on each side by a ring-shaped HslU homohexamer. The assembly of the HslU/HslV complex is dependent on binding of ATP.</text>
</comment>
<comment type="subcellular location">
    <subcellularLocation>
        <location evidence="1">Cytoplasm</location>
    </subcellularLocation>
</comment>
<comment type="similarity">
    <text evidence="1">Belongs to the peptidase T1B family. HslV subfamily.</text>
</comment>
<organism>
    <name type="scientific">Methylorubrum extorquens (strain CM4 / NCIMB 13688)</name>
    <name type="common">Methylobacterium extorquens</name>
    <dbReference type="NCBI Taxonomy" id="440085"/>
    <lineage>
        <taxon>Bacteria</taxon>
        <taxon>Pseudomonadati</taxon>
        <taxon>Pseudomonadota</taxon>
        <taxon>Alphaproteobacteria</taxon>
        <taxon>Hyphomicrobiales</taxon>
        <taxon>Methylobacteriaceae</taxon>
        <taxon>Methylorubrum</taxon>
    </lineage>
</organism>
<protein>
    <recommendedName>
        <fullName evidence="1">ATP-dependent protease subunit HslV</fullName>
        <ecNumber evidence="1">3.4.25.2</ecNumber>
    </recommendedName>
</protein>
<keyword id="KW-0021">Allosteric enzyme</keyword>
<keyword id="KW-0963">Cytoplasm</keyword>
<keyword id="KW-0378">Hydrolase</keyword>
<keyword id="KW-0479">Metal-binding</keyword>
<keyword id="KW-0645">Protease</keyword>
<keyword id="KW-0915">Sodium</keyword>
<keyword id="KW-0888">Threonine protease</keyword>
<reference key="1">
    <citation type="submission" date="2008-12" db="EMBL/GenBank/DDBJ databases">
        <title>Complete sequence of chromosome of Methylobacterium chloromethanicum CM4.</title>
        <authorList>
            <consortium name="US DOE Joint Genome Institute"/>
            <person name="Lucas S."/>
            <person name="Copeland A."/>
            <person name="Lapidus A."/>
            <person name="Glavina del Rio T."/>
            <person name="Dalin E."/>
            <person name="Tice H."/>
            <person name="Bruce D."/>
            <person name="Goodwin L."/>
            <person name="Pitluck S."/>
            <person name="Chertkov O."/>
            <person name="Brettin T."/>
            <person name="Detter J.C."/>
            <person name="Han C."/>
            <person name="Larimer F."/>
            <person name="Land M."/>
            <person name="Hauser L."/>
            <person name="Kyrpides N."/>
            <person name="Mikhailova N."/>
            <person name="Marx C."/>
            <person name="Richardson P."/>
        </authorList>
    </citation>
    <scope>NUCLEOTIDE SEQUENCE [LARGE SCALE GENOMIC DNA]</scope>
    <source>
        <strain>CM4 / NCIMB 13688</strain>
    </source>
</reference>
<accession>B7KZ47</accession>
<proteinExistence type="inferred from homology"/>
<feature type="chain" id="PRO_1000125412" description="ATP-dependent protease subunit HslV">
    <location>
        <begin position="1"/>
        <end position="186"/>
    </location>
</feature>
<feature type="active site" evidence="1">
    <location>
        <position position="14"/>
    </location>
</feature>
<feature type="binding site" evidence="1">
    <location>
        <position position="168"/>
    </location>
    <ligand>
        <name>Na(+)</name>
        <dbReference type="ChEBI" id="CHEBI:29101"/>
    </ligand>
</feature>
<feature type="binding site" evidence="1">
    <location>
        <position position="171"/>
    </location>
    <ligand>
        <name>Na(+)</name>
        <dbReference type="ChEBI" id="CHEBI:29101"/>
    </ligand>
</feature>
<feature type="binding site" evidence="1">
    <location>
        <position position="174"/>
    </location>
    <ligand>
        <name>Na(+)</name>
        <dbReference type="ChEBI" id="CHEBI:29101"/>
    </ligand>
</feature>
<name>HSLV_METC4</name>